<evidence type="ECO:0000250" key="1"/>
<evidence type="ECO:0000250" key="2">
    <source>
        <dbReference type="UniProtKB" id="Q32NQ7"/>
    </source>
</evidence>
<evidence type="ECO:0000256" key="3">
    <source>
        <dbReference type="SAM" id="MobiDB-lite"/>
    </source>
</evidence>
<evidence type="ECO:0000269" key="4">
    <source>
    </source>
</evidence>
<evidence type="ECO:0000305" key="5"/>
<protein>
    <recommendedName>
        <fullName>Dynein axonemal assembly factor 3</fullName>
    </recommendedName>
</protein>
<reference key="1">
    <citation type="journal article" date="2013" name="Nature">
        <title>The zebrafish reference genome sequence and its relationship to the human genome.</title>
        <authorList>
            <person name="Howe K."/>
            <person name="Clark M.D."/>
            <person name="Torroja C.F."/>
            <person name="Torrance J."/>
            <person name="Berthelot C."/>
            <person name="Muffato M."/>
            <person name="Collins J.E."/>
            <person name="Humphray S."/>
            <person name="McLaren K."/>
            <person name="Matthews L."/>
            <person name="McLaren S."/>
            <person name="Sealy I."/>
            <person name="Caccamo M."/>
            <person name="Churcher C."/>
            <person name="Scott C."/>
            <person name="Barrett J.C."/>
            <person name="Koch R."/>
            <person name="Rauch G.J."/>
            <person name="White S."/>
            <person name="Chow W."/>
            <person name="Kilian B."/>
            <person name="Quintais L.T."/>
            <person name="Guerra-Assuncao J.A."/>
            <person name="Zhou Y."/>
            <person name="Gu Y."/>
            <person name="Yen J."/>
            <person name="Vogel J.H."/>
            <person name="Eyre T."/>
            <person name="Redmond S."/>
            <person name="Banerjee R."/>
            <person name="Chi J."/>
            <person name="Fu B."/>
            <person name="Langley E."/>
            <person name="Maguire S.F."/>
            <person name="Laird G.K."/>
            <person name="Lloyd D."/>
            <person name="Kenyon E."/>
            <person name="Donaldson S."/>
            <person name="Sehra H."/>
            <person name="Almeida-King J."/>
            <person name="Loveland J."/>
            <person name="Trevanion S."/>
            <person name="Jones M."/>
            <person name="Quail M."/>
            <person name="Willey D."/>
            <person name="Hunt A."/>
            <person name="Burton J."/>
            <person name="Sims S."/>
            <person name="McLay K."/>
            <person name="Plumb B."/>
            <person name="Davis J."/>
            <person name="Clee C."/>
            <person name="Oliver K."/>
            <person name="Clark R."/>
            <person name="Riddle C."/>
            <person name="Elliot D."/>
            <person name="Threadgold G."/>
            <person name="Harden G."/>
            <person name="Ware D."/>
            <person name="Begum S."/>
            <person name="Mortimore B."/>
            <person name="Kerry G."/>
            <person name="Heath P."/>
            <person name="Phillimore B."/>
            <person name="Tracey A."/>
            <person name="Corby N."/>
            <person name="Dunn M."/>
            <person name="Johnson C."/>
            <person name="Wood J."/>
            <person name="Clark S."/>
            <person name="Pelan S."/>
            <person name="Griffiths G."/>
            <person name="Smith M."/>
            <person name="Glithero R."/>
            <person name="Howden P."/>
            <person name="Barker N."/>
            <person name="Lloyd C."/>
            <person name="Stevens C."/>
            <person name="Harley J."/>
            <person name="Holt K."/>
            <person name="Panagiotidis G."/>
            <person name="Lovell J."/>
            <person name="Beasley H."/>
            <person name="Henderson C."/>
            <person name="Gordon D."/>
            <person name="Auger K."/>
            <person name="Wright D."/>
            <person name="Collins J."/>
            <person name="Raisen C."/>
            <person name="Dyer L."/>
            <person name="Leung K."/>
            <person name="Robertson L."/>
            <person name="Ambridge K."/>
            <person name="Leongamornlert D."/>
            <person name="McGuire S."/>
            <person name="Gilderthorp R."/>
            <person name="Griffiths C."/>
            <person name="Manthravadi D."/>
            <person name="Nichol S."/>
            <person name="Barker G."/>
            <person name="Whitehead S."/>
            <person name="Kay M."/>
            <person name="Brown J."/>
            <person name="Murnane C."/>
            <person name="Gray E."/>
            <person name="Humphries M."/>
            <person name="Sycamore N."/>
            <person name="Barker D."/>
            <person name="Saunders D."/>
            <person name="Wallis J."/>
            <person name="Babbage A."/>
            <person name="Hammond S."/>
            <person name="Mashreghi-Mohammadi M."/>
            <person name="Barr L."/>
            <person name="Martin S."/>
            <person name="Wray P."/>
            <person name="Ellington A."/>
            <person name="Matthews N."/>
            <person name="Ellwood M."/>
            <person name="Woodmansey R."/>
            <person name="Clark G."/>
            <person name="Cooper J."/>
            <person name="Tromans A."/>
            <person name="Grafham D."/>
            <person name="Skuce C."/>
            <person name="Pandian R."/>
            <person name="Andrews R."/>
            <person name="Harrison E."/>
            <person name="Kimberley A."/>
            <person name="Garnett J."/>
            <person name="Fosker N."/>
            <person name="Hall R."/>
            <person name="Garner P."/>
            <person name="Kelly D."/>
            <person name="Bird C."/>
            <person name="Palmer S."/>
            <person name="Gehring I."/>
            <person name="Berger A."/>
            <person name="Dooley C.M."/>
            <person name="Ersan-Urun Z."/>
            <person name="Eser C."/>
            <person name="Geiger H."/>
            <person name="Geisler M."/>
            <person name="Karotki L."/>
            <person name="Kirn A."/>
            <person name="Konantz J."/>
            <person name="Konantz M."/>
            <person name="Oberlander M."/>
            <person name="Rudolph-Geiger S."/>
            <person name="Teucke M."/>
            <person name="Lanz C."/>
            <person name="Raddatz G."/>
            <person name="Osoegawa K."/>
            <person name="Zhu B."/>
            <person name="Rapp A."/>
            <person name="Widaa S."/>
            <person name="Langford C."/>
            <person name="Yang F."/>
            <person name="Schuster S.C."/>
            <person name="Carter N.P."/>
            <person name="Harrow J."/>
            <person name="Ning Z."/>
            <person name="Herrero J."/>
            <person name="Searle S.M."/>
            <person name="Enright A."/>
            <person name="Geisler R."/>
            <person name="Plasterk R.H."/>
            <person name="Lee C."/>
            <person name="Westerfield M."/>
            <person name="de Jong P.J."/>
            <person name="Zon L.I."/>
            <person name="Postlethwait J.H."/>
            <person name="Nusslein-Volhard C."/>
            <person name="Hubbard T.J."/>
            <person name="Roest Crollius H."/>
            <person name="Rogers J."/>
            <person name="Stemple D.L."/>
        </authorList>
    </citation>
    <scope>NUCLEOTIDE SEQUENCE [LARGE SCALE GENOMIC DNA]</scope>
    <source>
        <strain>Tuebingen</strain>
    </source>
</reference>
<reference key="2">
    <citation type="journal article" date="2012" name="Nat. Genet.">
        <title>Mutations in axonemal dynein assembly factor DNAAF3 cause primary ciliary dyskinesia.</title>
        <authorList>
            <person name="Mitchison H.M."/>
            <person name="Schmidts M."/>
            <person name="Loges N.T."/>
            <person name="Freshour J."/>
            <person name="Dritsoula A."/>
            <person name="Hirst R.A."/>
            <person name="O'Callaghan C."/>
            <person name="Blau H."/>
            <person name="Al Dabbagh M."/>
            <person name="Olbrich H."/>
            <person name="Beales P.L."/>
            <person name="Yagi T."/>
            <person name="Mussaffi H."/>
            <person name="Chung E.M."/>
            <person name="Omran H."/>
            <person name="Mitchell D.R."/>
        </authorList>
    </citation>
    <scope>FUNCTION</scope>
    <scope>DISRUPTION PHENOTYPE</scope>
    <scope>TISSUE SPECIFICITY</scope>
</reference>
<gene>
    <name type="primary">dnaaf3</name>
    <name type="ORF">si:dkey-224b4.3</name>
</gene>
<name>DAAF3_DANRE</name>
<feature type="chain" id="PRO_0000416895" description="Dynein axonemal assembly factor 3">
    <location>
        <begin position="1"/>
        <end position="469"/>
    </location>
</feature>
<feature type="region of interest" description="Disordered" evidence="3">
    <location>
        <begin position="313"/>
        <end position="356"/>
    </location>
</feature>
<feature type="compositionally biased region" description="Polar residues" evidence="3">
    <location>
        <begin position="320"/>
        <end position="331"/>
    </location>
</feature>
<feature type="compositionally biased region" description="Polar residues" evidence="3">
    <location>
        <begin position="339"/>
        <end position="356"/>
    </location>
</feature>
<organism>
    <name type="scientific">Danio rerio</name>
    <name type="common">Zebrafish</name>
    <name type="synonym">Brachydanio rerio</name>
    <dbReference type="NCBI Taxonomy" id="7955"/>
    <lineage>
        <taxon>Eukaryota</taxon>
        <taxon>Metazoa</taxon>
        <taxon>Chordata</taxon>
        <taxon>Craniata</taxon>
        <taxon>Vertebrata</taxon>
        <taxon>Euteleostomi</taxon>
        <taxon>Actinopterygii</taxon>
        <taxon>Neopterygii</taxon>
        <taxon>Teleostei</taxon>
        <taxon>Ostariophysi</taxon>
        <taxon>Cypriniformes</taxon>
        <taxon>Danionidae</taxon>
        <taxon>Danioninae</taxon>
        <taxon>Danio</taxon>
    </lineage>
</organism>
<accession>F1Q7Z7</accession>
<accession>E9QIE9</accession>
<accession>F1QTP0</accession>
<comment type="function">
    <text evidence="4">Required for the assembly of axonemal inner and outer dynein arms. Involved in preassembly of dyneins into complexes before their transport into cilia.</text>
</comment>
<comment type="subcellular location">
    <subcellularLocation>
        <location evidence="1">Cytoplasm</location>
    </subcellularLocation>
    <subcellularLocation>
        <location evidence="2">Dynein axonemal particle</location>
    </subcellularLocation>
</comment>
<comment type="tissue specificity">
    <text evidence="4">Mainly expressed in cell types that express axonemal dyneins.</text>
</comment>
<comment type="disruption phenotype">
    <text evidence="4">Static olfactory placode cilia; reduced movement of debris in the olfactory placode. The morphology and number of cilia in the olfactory placode is unaffected, but an abnormal ultrastructure in these cilia is observed, including reduced or missing outer and inner dynein arms.</text>
</comment>
<comment type="similarity">
    <text evidence="5">Belongs to the DNAAF3 family.</text>
</comment>
<proteinExistence type="evidence at transcript level"/>
<keyword id="KW-0970">Cilium biogenesis/degradation</keyword>
<keyword id="KW-0963">Cytoplasm</keyword>
<keyword id="KW-1185">Reference proteome</keyword>
<dbReference type="EMBL" id="CR954298">
    <property type="status" value="NOT_ANNOTATED_CDS"/>
    <property type="molecule type" value="Genomic_DNA"/>
</dbReference>
<dbReference type="RefSeq" id="XP_068073355.1">
    <property type="nucleotide sequence ID" value="XM_068217254.1"/>
</dbReference>
<dbReference type="FunCoup" id="F1Q7Z7">
    <property type="interactions" value="134"/>
</dbReference>
<dbReference type="STRING" id="7955.ENSDARP00000118558"/>
<dbReference type="PaxDb" id="7955-ENSDARP00000118558"/>
<dbReference type="Ensembl" id="ENSDART00000137777">
    <property type="protein sequence ID" value="ENSDARP00000118558"/>
    <property type="gene ID" value="ENSDARG00000092662"/>
</dbReference>
<dbReference type="GeneID" id="100148431"/>
<dbReference type="AGR" id="ZFIN:ZDB-GENE-091204-296"/>
<dbReference type="ZFIN" id="ZDB-GENE-091204-296">
    <property type="gene designation" value="dnaaf3"/>
</dbReference>
<dbReference type="eggNOG" id="ENOG502QT97">
    <property type="taxonomic scope" value="Eukaryota"/>
</dbReference>
<dbReference type="HOGENOM" id="CLU_024420_2_1_1"/>
<dbReference type="InParanoid" id="F1Q7Z7"/>
<dbReference type="OMA" id="EYEQCKP"/>
<dbReference type="OrthoDB" id="538817at2759"/>
<dbReference type="PhylomeDB" id="F1Q7Z7"/>
<dbReference type="TreeFam" id="TF323981"/>
<dbReference type="PRO" id="PR:F1Q7Z7"/>
<dbReference type="Proteomes" id="UP000000437">
    <property type="component" value="Chromosome 24"/>
</dbReference>
<dbReference type="Bgee" id="ENSDARG00000092662">
    <property type="expression patterns" value="Expressed in testis and 6 other cell types or tissues"/>
</dbReference>
<dbReference type="GO" id="GO:0120293">
    <property type="term" value="C:dynein axonemal particle"/>
    <property type="evidence" value="ECO:0000250"/>
    <property type="project" value="UniProtKB"/>
</dbReference>
<dbReference type="GO" id="GO:0070286">
    <property type="term" value="P:axonemal dynein complex assembly"/>
    <property type="evidence" value="ECO:0000315"/>
    <property type="project" value="ZFIN"/>
</dbReference>
<dbReference type="GO" id="GO:0003341">
    <property type="term" value="P:cilium movement"/>
    <property type="evidence" value="ECO:0000315"/>
    <property type="project" value="ZFIN"/>
</dbReference>
<dbReference type="GO" id="GO:0044458">
    <property type="term" value="P:motile cilium assembly"/>
    <property type="evidence" value="ECO:0000315"/>
    <property type="project" value="UniProtKB"/>
</dbReference>
<dbReference type="InterPro" id="IPR039304">
    <property type="entry name" value="DNAAF3"/>
</dbReference>
<dbReference type="InterPro" id="IPR028235">
    <property type="entry name" value="DNAAF3_C"/>
</dbReference>
<dbReference type="InterPro" id="IPR027974">
    <property type="entry name" value="DUF4470"/>
</dbReference>
<dbReference type="PANTHER" id="PTHR22118">
    <property type="entry name" value="DYNEIN ASSEMBLY FACTOR 3, AXONEMAL"/>
    <property type="match status" value="1"/>
</dbReference>
<dbReference type="PANTHER" id="PTHR22118:SF14">
    <property type="entry name" value="DYNEIN AXONEMAL ASSEMBLY FACTOR 3"/>
    <property type="match status" value="1"/>
</dbReference>
<dbReference type="Pfam" id="PF14737">
    <property type="entry name" value="DUF4470"/>
    <property type="match status" value="1"/>
</dbReference>
<dbReference type="Pfam" id="PF14740">
    <property type="entry name" value="DUF4471"/>
    <property type="match status" value="1"/>
</dbReference>
<sequence>MSAGRTFEGAGCVTWWGFGPARDLLNSDTHKVRLQEELNVLLVGSGDPRHILKTITGLTHSDTLHVWVIENSMEVIARQLLLLYISLLPPDKMSVHKKTEVFLEVFGNLEIRKETEESVKKAAAQLSISITYSLSSDSLSHSCLDTSLLKFKERDELVRIFKLWERPPSAPASVSKVWDARVRQHLGSRYDSRQGAFDWDLNMKLHQRGCGVINKHQYAKWRETGVTFEMREGLYQTANQSLLSTRVFNHRGNGVALRGYWGDIVSSPYLSFGIETENKELLKTQNNHYVKTAQDISEVNLLELFECLAARGRSPLNEDPPNTSSSCCQSTESRKTEENSQSDPSASQTQPVEHSPTQELDLLNVNGVKVSFLSPDSLSKLPLKSKYRNLFNTIFCSASMVHQLDSALREIAAPDAALVIELATFLLDLSKEQVSGFAVKVKEIAEESGFTPAHDQNSDKYAVFTQKNN</sequence>